<gene>
    <name evidence="1" type="primary">rpoC</name>
    <name type="ordered locus">Mfla_0273</name>
</gene>
<reference key="1">
    <citation type="submission" date="2006-03" db="EMBL/GenBank/DDBJ databases">
        <title>Complete sequence of Methylobacillus flagellatus KT.</title>
        <authorList>
            <consortium name="US DOE Joint Genome Institute"/>
            <person name="Copeland A."/>
            <person name="Lucas S."/>
            <person name="Lapidus A."/>
            <person name="Barry K."/>
            <person name="Detter J.C."/>
            <person name="Glavina del Rio T."/>
            <person name="Hammon N."/>
            <person name="Israni S."/>
            <person name="Dalin E."/>
            <person name="Tice H."/>
            <person name="Pitluck S."/>
            <person name="Brettin T."/>
            <person name="Bruce D."/>
            <person name="Han C."/>
            <person name="Tapia R."/>
            <person name="Saunders E."/>
            <person name="Gilna P."/>
            <person name="Schmutz J."/>
            <person name="Larimer F."/>
            <person name="Land M."/>
            <person name="Kyrpides N."/>
            <person name="Anderson I."/>
            <person name="Richardson P."/>
        </authorList>
    </citation>
    <scope>NUCLEOTIDE SEQUENCE [LARGE SCALE GENOMIC DNA]</scope>
    <source>
        <strain>ATCC 51484 / DSM 6875 / VKM B-1610 / KT</strain>
    </source>
</reference>
<accession>Q1H4P3</accession>
<sequence length="1409" mass="155516">MKALLDLFKQVTQEEEFDAIKIALASPEKIRSWSYGEVKKPETINYRTFKPERDGLFCAKIFGPIKDYECLCGKYKRLKHRGVICEKCGVEVTLSKVRRERMAHIELASPVAHIWFLKSLPSRLGMVLDIALRDIERVLYFEAYIVIDPGMTPLTRGQLLTEDDYLSKVEEYGDEFNAVMGAEAVRELLRTMDIHTEIEKLRRELGETGSEAKIKKIAKRLKVLEAFQKSGIKPEWMILEVLPVLPPELRPLVPLDGGRFATSDLNDLYRRVINRNNRLKRLLELKAPEIIVRNEKRMLQEAVDSLLDNGRRGKVMTGANKRPLKSLADMIKGKGGRFRQNLLGKRVDYSGRSVIVVGPQLKLHQCGLPKKMALELFKPFIFHKLEVLGLATTIKAAKKKVEEEGPEVWDILEDVIREHPVLLNRAPTLHRLGIQAFEPTLVEGKAIQLHPLVCAAFNADFDGDQMAVHVPLSLEAQMEARTLMLASNNVLSPANGEPIIVPSQDIVLGLYYMTREKKAARGEGMRFANVAEVQRAYDSGQVDLHARITVRLREFDVEVDGQKREKITRYETTVGRALLSEILPAGLPFSVIDKALKKKEISRLINASFRRVGIRETVIFADKLMYTGYTYATKAGISISINDMLVPPEKEQLIASAEAEVKEIEDQYVSGLVTQGERYNKVVDIWGRAGDKVADAMMKQLREEVVLDANGEVAKDAEGNPIKQESFNAIYMMADSGARGSAAQVRQLAGMRGLMAKPDGSIIETPITANFRDGLNVLQYFISTHGARKGLADTALKTANSGYLTRRLVDVTQDLVVTEHDCGTTEGLYTKALVKGGEVVEPLHDRILGRVAALDVLNPETQEVVYPAGTLLTEDEVEHIDALGIDEVKVRTALTCETRYGICAKCYGRDLGRGKLINMGEAVGVIAAQSIGEPGTQLTMRTFHIGGAVSRAASVSQVESKSNGIVHFTSTMRYVTNARGEQVVISRNGEAIIQDENGRERERHKVPYGATLQITDGKPVKAGQALATWDPHTRPIITEYAGRVKFENVEEGVTVAKQVDEVTGLSSLVVIDPKQRAGQSKGLRPQVKLLDANGVEVKVAGGEAPVSVTFQLGCIITVKDGQEVGVGEVLARIPQESSKTRDITGGLPRVAELFEARSPKDAGLLAEVTGTISFGKDTKGKQRLVITDLDGVSHEFLIPKDKHVTAHDGQVVTKGESIVDGPADPQDILRLQGREALARYIIDEVQDVYRLQGVKINDKHIEVIVRQMLRRVRITDAGDTSFILGEQVERADVLTENERVLAQDGRPASFEYVLLGITKASLSTDSFISAASFQETTRVLTEAAILGKRDELRGLKENVIVGRLIPAGTGLAYHETRKRNVAGVDSAPAIIEDAGNVQLEETSGNPEVA</sequence>
<protein>
    <recommendedName>
        <fullName evidence="1">DNA-directed RNA polymerase subunit beta'</fullName>
        <shortName evidence="1">RNAP subunit beta'</shortName>
        <ecNumber evidence="1">2.7.7.6</ecNumber>
    </recommendedName>
    <alternativeName>
        <fullName evidence="1">RNA polymerase subunit beta'</fullName>
    </alternativeName>
    <alternativeName>
        <fullName evidence="1">Transcriptase subunit beta'</fullName>
    </alternativeName>
</protein>
<comment type="function">
    <text evidence="1">DNA-dependent RNA polymerase catalyzes the transcription of DNA into RNA using the four ribonucleoside triphosphates as substrates.</text>
</comment>
<comment type="catalytic activity">
    <reaction evidence="1">
        <text>RNA(n) + a ribonucleoside 5'-triphosphate = RNA(n+1) + diphosphate</text>
        <dbReference type="Rhea" id="RHEA:21248"/>
        <dbReference type="Rhea" id="RHEA-COMP:14527"/>
        <dbReference type="Rhea" id="RHEA-COMP:17342"/>
        <dbReference type="ChEBI" id="CHEBI:33019"/>
        <dbReference type="ChEBI" id="CHEBI:61557"/>
        <dbReference type="ChEBI" id="CHEBI:140395"/>
        <dbReference type="EC" id="2.7.7.6"/>
    </reaction>
</comment>
<comment type="cofactor">
    <cofactor evidence="1">
        <name>Mg(2+)</name>
        <dbReference type="ChEBI" id="CHEBI:18420"/>
    </cofactor>
    <text evidence="1">Binds 1 Mg(2+) ion per subunit.</text>
</comment>
<comment type="cofactor">
    <cofactor evidence="1">
        <name>Zn(2+)</name>
        <dbReference type="ChEBI" id="CHEBI:29105"/>
    </cofactor>
    <text evidence="1">Binds 2 Zn(2+) ions per subunit.</text>
</comment>
<comment type="subunit">
    <text evidence="1">The RNAP catalytic core consists of 2 alpha, 1 beta, 1 beta' and 1 omega subunit. When a sigma factor is associated with the core the holoenzyme is formed, which can initiate transcription.</text>
</comment>
<comment type="similarity">
    <text evidence="1">Belongs to the RNA polymerase beta' chain family.</text>
</comment>
<proteinExistence type="inferred from homology"/>
<dbReference type="EC" id="2.7.7.6" evidence="1"/>
<dbReference type="EMBL" id="CP000284">
    <property type="protein sequence ID" value="ABE48544.1"/>
    <property type="molecule type" value="Genomic_DNA"/>
</dbReference>
<dbReference type="RefSeq" id="WP_011478641.1">
    <property type="nucleotide sequence ID" value="NC_007947.1"/>
</dbReference>
<dbReference type="SMR" id="Q1H4P3"/>
<dbReference type="STRING" id="265072.Mfla_0273"/>
<dbReference type="KEGG" id="mfa:Mfla_0273"/>
<dbReference type="eggNOG" id="COG0086">
    <property type="taxonomic scope" value="Bacteria"/>
</dbReference>
<dbReference type="HOGENOM" id="CLU_000524_3_1_4"/>
<dbReference type="OrthoDB" id="9815296at2"/>
<dbReference type="Proteomes" id="UP000002440">
    <property type="component" value="Chromosome"/>
</dbReference>
<dbReference type="GO" id="GO:0000428">
    <property type="term" value="C:DNA-directed RNA polymerase complex"/>
    <property type="evidence" value="ECO:0007669"/>
    <property type="project" value="UniProtKB-KW"/>
</dbReference>
<dbReference type="GO" id="GO:0003677">
    <property type="term" value="F:DNA binding"/>
    <property type="evidence" value="ECO:0007669"/>
    <property type="project" value="UniProtKB-UniRule"/>
</dbReference>
<dbReference type="GO" id="GO:0003899">
    <property type="term" value="F:DNA-directed RNA polymerase activity"/>
    <property type="evidence" value="ECO:0007669"/>
    <property type="project" value="UniProtKB-UniRule"/>
</dbReference>
<dbReference type="GO" id="GO:0000287">
    <property type="term" value="F:magnesium ion binding"/>
    <property type="evidence" value="ECO:0007669"/>
    <property type="project" value="UniProtKB-UniRule"/>
</dbReference>
<dbReference type="GO" id="GO:0008270">
    <property type="term" value="F:zinc ion binding"/>
    <property type="evidence" value="ECO:0007669"/>
    <property type="project" value="UniProtKB-UniRule"/>
</dbReference>
<dbReference type="GO" id="GO:0006351">
    <property type="term" value="P:DNA-templated transcription"/>
    <property type="evidence" value="ECO:0007669"/>
    <property type="project" value="UniProtKB-UniRule"/>
</dbReference>
<dbReference type="CDD" id="cd02655">
    <property type="entry name" value="RNAP_beta'_C"/>
    <property type="match status" value="1"/>
</dbReference>
<dbReference type="CDD" id="cd01609">
    <property type="entry name" value="RNAP_beta'_N"/>
    <property type="match status" value="1"/>
</dbReference>
<dbReference type="FunFam" id="1.10.132.30:FF:000003">
    <property type="entry name" value="DNA-directed RNA polymerase subunit beta"/>
    <property type="match status" value="1"/>
</dbReference>
<dbReference type="FunFam" id="1.10.150.390:FF:000002">
    <property type="entry name" value="DNA-directed RNA polymerase subunit beta"/>
    <property type="match status" value="1"/>
</dbReference>
<dbReference type="FunFam" id="4.10.860.120:FF:000001">
    <property type="entry name" value="DNA-directed RNA polymerase subunit beta"/>
    <property type="match status" value="1"/>
</dbReference>
<dbReference type="Gene3D" id="1.10.132.30">
    <property type="match status" value="1"/>
</dbReference>
<dbReference type="Gene3D" id="1.10.150.390">
    <property type="match status" value="1"/>
</dbReference>
<dbReference type="Gene3D" id="1.10.1790.20">
    <property type="match status" value="1"/>
</dbReference>
<dbReference type="Gene3D" id="1.10.40.90">
    <property type="match status" value="1"/>
</dbReference>
<dbReference type="Gene3D" id="2.40.40.20">
    <property type="match status" value="1"/>
</dbReference>
<dbReference type="Gene3D" id="2.40.50.100">
    <property type="match status" value="3"/>
</dbReference>
<dbReference type="Gene3D" id="4.10.860.120">
    <property type="entry name" value="RNA polymerase II, clamp domain"/>
    <property type="match status" value="1"/>
</dbReference>
<dbReference type="Gene3D" id="1.10.274.100">
    <property type="entry name" value="RNA polymerase Rpb1, domain 3"/>
    <property type="match status" value="1"/>
</dbReference>
<dbReference type="HAMAP" id="MF_01322">
    <property type="entry name" value="RNApol_bact_RpoC"/>
    <property type="match status" value="1"/>
</dbReference>
<dbReference type="InterPro" id="IPR045867">
    <property type="entry name" value="DNA-dir_RpoC_beta_prime"/>
</dbReference>
<dbReference type="InterPro" id="IPR012754">
    <property type="entry name" value="DNA-dir_RpoC_beta_prime_bact"/>
</dbReference>
<dbReference type="InterPro" id="IPR000722">
    <property type="entry name" value="RNA_pol_asu"/>
</dbReference>
<dbReference type="InterPro" id="IPR006592">
    <property type="entry name" value="RNA_pol_N"/>
</dbReference>
<dbReference type="InterPro" id="IPR007080">
    <property type="entry name" value="RNA_pol_Rpb1_1"/>
</dbReference>
<dbReference type="InterPro" id="IPR007066">
    <property type="entry name" value="RNA_pol_Rpb1_3"/>
</dbReference>
<dbReference type="InterPro" id="IPR042102">
    <property type="entry name" value="RNA_pol_Rpb1_3_sf"/>
</dbReference>
<dbReference type="InterPro" id="IPR007083">
    <property type="entry name" value="RNA_pol_Rpb1_4"/>
</dbReference>
<dbReference type="InterPro" id="IPR007081">
    <property type="entry name" value="RNA_pol_Rpb1_5"/>
</dbReference>
<dbReference type="InterPro" id="IPR044893">
    <property type="entry name" value="RNA_pol_Rpb1_clamp_domain"/>
</dbReference>
<dbReference type="InterPro" id="IPR038120">
    <property type="entry name" value="Rpb1_funnel_sf"/>
</dbReference>
<dbReference type="NCBIfam" id="TIGR02386">
    <property type="entry name" value="rpoC_TIGR"/>
    <property type="match status" value="1"/>
</dbReference>
<dbReference type="PANTHER" id="PTHR19376">
    <property type="entry name" value="DNA-DIRECTED RNA POLYMERASE"/>
    <property type="match status" value="1"/>
</dbReference>
<dbReference type="PANTHER" id="PTHR19376:SF54">
    <property type="entry name" value="DNA-DIRECTED RNA POLYMERASE SUBUNIT BETA"/>
    <property type="match status" value="1"/>
</dbReference>
<dbReference type="Pfam" id="PF04997">
    <property type="entry name" value="RNA_pol_Rpb1_1"/>
    <property type="match status" value="1"/>
</dbReference>
<dbReference type="Pfam" id="PF00623">
    <property type="entry name" value="RNA_pol_Rpb1_2"/>
    <property type="match status" value="2"/>
</dbReference>
<dbReference type="Pfam" id="PF04983">
    <property type="entry name" value="RNA_pol_Rpb1_3"/>
    <property type="match status" value="1"/>
</dbReference>
<dbReference type="Pfam" id="PF05000">
    <property type="entry name" value="RNA_pol_Rpb1_4"/>
    <property type="match status" value="1"/>
</dbReference>
<dbReference type="Pfam" id="PF04998">
    <property type="entry name" value="RNA_pol_Rpb1_5"/>
    <property type="match status" value="1"/>
</dbReference>
<dbReference type="SMART" id="SM00663">
    <property type="entry name" value="RPOLA_N"/>
    <property type="match status" value="1"/>
</dbReference>
<dbReference type="SUPFAM" id="SSF64484">
    <property type="entry name" value="beta and beta-prime subunits of DNA dependent RNA-polymerase"/>
    <property type="match status" value="1"/>
</dbReference>
<keyword id="KW-0240">DNA-directed RNA polymerase</keyword>
<keyword id="KW-0460">Magnesium</keyword>
<keyword id="KW-0479">Metal-binding</keyword>
<keyword id="KW-0548">Nucleotidyltransferase</keyword>
<keyword id="KW-1185">Reference proteome</keyword>
<keyword id="KW-0804">Transcription</keyword>
<keyword id="KW-0808">Transferase</keyword>
<keyword id="KW-0862">Zinc</keyword>
<organism>
    <name type="scientific">Methylobacillus flagellatus (strain ATCC 51484 / DSM 6875 / VKM B-1610 / KT)</name>
    <dbReference type="NCBI Taxonomy" id="265072"/>
    <lineage>
        <taxon>Bacteria</taxon>
        <taxon>Pseudomonadati</taxon>
        <taxon>Pseudomonadota</taxon>
        <taxon>Betaproteobacteria</taxon>
        <taxon>Nitrosomonadales</taxon>
        <taxon>Methylophilaceae</taxon>
        <taxon>Methylobacillus</taxon>
    </lineage>
</organism>
<evidence type="ECO:0000255" key="1">
    <source>
        <dbReference type="HAMAP-Rule" id="MF_01322"/>
    </source>
</evidence>
<name>RPOC_METFK</name>
<feature type="chain" id="PRO_0000353392" description="DNA-directed RNA polymerase subunit beta'">
    <location>
        <begin position="1"/>
        <end position="1409"/>
    </location>
</feature>
<feature type="binding site" evidence="1">
    <location>
        <position position="70"/>
    </location>
    <ligand>
        <name>Zn(2+)</name>
        <dbReference type="ChEBI" id="CHEBI:29105"/>
        <label>1</label>
    </ligand>
</feature>
<feature type="binding site" evidence="1">
    <location>
        <position position="72"/>
    </location>
    <ligand>
        <name>Zn(2+)</name>
        <dbReference type="ChEBI" id="CHEBI:29105"/>
        <label>1</label>
    </ligand>
</feature>
<feature type="binding site" evidence="1">
    <location>
        <position position="85"/>
    </location>
    <ligand>
        <name>Zn(2+)</name>
        <dbReference type="ChEBI" id="CHEBI:29105"/>
        <label>1</label>
    </ligand>
</feature>
<feature type="binding site" evidence="1">
    <location>
        <position position="88"/>
    </location>
    <ligand>
        <name>Zn(2+)</name>
        <dbReference type="ChEBI" id="CHEBI:29105"/>
        <label>1</label>
    </ligand>
</feature>
<feature type="binding site" evidence="1">
    <location>
        <position position="460"/>
    </location>
    <ligand>
        <name>Mg(2+)</name>
        <dbReference type="ChEBI" id="CHEBI:18420"/>
    </ligand>
</feature>
<feature type="binding site" evidence="1">
    <location>
        <position position="462"/>
    </location>
    <ligand>
        <name>Mg(2+)</name>
        <dbReference type="ChEBI" id="CHEBI:18420"/>
    </ligand>
</feature>
<feature type="binding site" evidence="1">
    <location>
        <position position="464"/>
    </location>
    <ligand>
        <name>Mg(2+)</name>
        <dbReference type="ChEBI" id="CHEBI:18420"/>
    </ligand>
</feature>
<feature type="binding site" evidence="1">
    <location>
        <position position="822"/>
    </location>
    <ligand>
        <name>Zn(2+)</name>
        <dbReference type="ChEBI" id="CHEBI:29105"/>
        <label>2</label>
    </ligand>
</feature>
<feature type="binding site" evidence="1">
    <location>
        <position position="896"/>
    </location>
    <ligand>
        <name>Zn(2+)</name>
        <dbReference type="ChEBI" id="CHEBI:29105"/>
        <label>2</label>
    </ligand>
</feature>
<feature type="binding site" evidence="1">
    <location>
        <position position="903"/>
    </location>
    <ligand>
        <name>Zn(2+)</name>
        <dbReference type="ChEBI" id="CHEBI:29105"/>
        <label>2</label>
    </ligand>
</feature>
<feature type="binding site" evidence="1">
    <location>
        <position position="906"/>
    </location>
    <ligand>
        <name>Zn(2+)</name>
        <dbReference type="ChEBI" id="CHEBI:29105"/>
        <label>2</label>
    </ligand>
</feature>